<evidence type="ECO:0000250" key="1">
    <source>
        <dbReference type="UniProtKB" id="P76318"/>
    </source>
</evidence>
<evidence type="ECO:0000250" key="2">
    <source>
        <dbReference type="UniProtKB" id="Q6IND6"/>
    </source>
</evidence>
<evidence type="ECO:0000250" key="3">
    <source>
        <dbReference type="UniProtKB" id="Q8R1M0"/>
    </source>
</evidence>
<evidence type="ECO:0000250" key="4">
    <source>
        <dbReference type="UniProtKB" id="Q96FZ2"/>
    </source>
</evidence>
<evidence type="ECO:0000256" key="5">
    <source>
        <dbReference type="SAM" id="MobiDB-lite"/>
    </source>
</evidence>
<evidence type="ECO:0000305" key="6"/>
<dbReference type="EC" id="4.-.-.-" evidence="4"/>
<dbReference type="EC" id="3.4.-.-" evidence="3"/>
<dbReference type="EMBL" id="CR761600">
    <property type="protein sequence ID" value="CAJ81530.1"/>
    <property type="molecule type" value="mRNA"/>
</dbReference>
<dbReference type="EMBL" id="BC061596">
    <property type="protein sequence ID" value="AAH61596.1"/>
    <property type="molecule type" value="mRNA"/>
</dbReference>
<dbReference type="RefSeq" id="NP_989149.1">
    <property type="nucleotide sequence ID" value="NM_203818.1"/>
</dbReference>
<dbReference type="RefSeq" id="XP_012816213.1">
    <property type="nucleotide sequence ID" value="XM_012960759.3"/>
</dbReference>
<dbReference type="SMR" id="Q6P7N4"/>
<dbReference type="FunCoup" id="Q6P7N4">
    <property type="interactions" value="516"/>
</dbReference>
<dbReference type="STRING" id="8364.ENSXETP00000019823"/>
<dbReference type="PaxDb" id="8364-ENSXETP00000035272"/>
<dbReference type="DNASU" id="394754"/>
<dbReference type="GeneID" id="394754"/>
<dbReference type="KEGG" id="xtr:394754"/>
<dbReference type="AGR" id="Xenbase:XB-GENE-964491"/>
<dbReference type="CTD" id="56941"/>
<dbReference type="Xenbase" id="XB-GENE-964491">
    <property type="gene designation" value="hmces"/>
</dbReference>
<dbReference type="eggNOG" id="KOG2618">
    <property type="taxonomic scope" value="Eukaryota"/>
</dbReference>
<dbReference type="HOGENOM" id="CLU_035990_1_0_1"/>
<dbReference type="InParanoid" id="Q6P7N4"/>
<dbReference type="OMA" id="SYNKGPQ"/>
<dbReference type="OrthoDB" id="2111841at2759"/>
<dbReference type="PhylomeDB" id="Q6P7N4"/>
<dbReference type="Proteomes" id="UP000008143">
    <property type="component" value="Chromosome 4"/>
</dbReference>
<dbReference type="Bgee" id="ENSXETG00000024746">
    <property type="expression patterns" value="Expressed in egg cell and 14 other cell types or tissues"/>
</dbReference>
<dbReference type="ExpressionAtlas" id="Q6P7N4">
    <property type="expression patterns" value="baseline"/>
</dbReference>
<dbReference type="GO" id="GO:0005657">
    <property type="term" value="C:replication fork"/>
    <property type="evidence" value="ECO:0000250"/>
    <property type="project" value="UniProtKB"/>
</dbReference>
<dbReference type="GO" id="GO:0008233">
    <property type="term" value="F:peptidase activity"/>
    <property type="evidence" value="ECO:0007669"/>
    <property type="project" value="UniProtKB-KW"/>
</dbReference>
<dbReference type="GO" id="GO:0160129">
    <property type="term" value="F:protein-DNA covalent cross-linking activity"/>
    <property type="evidence" value="ECO:0000250"/>
    <property type="project" value="UniProtKB"/>
</dbReference>
<dbReference type="GO" id="GO:0003697">
    <property type="term" value="F:single-stranded DNA binding"/>
    <property type="evidence" value="ECO:0000250"/>
    <property type="project" value="UniProtKB"/>
</dbReference>
<dbReference type="GO" id="GO:0006974">
    <property type="term" value="P:DNA damage response"/>
    <property type="evidence" value="ECO:0000250"/>
    <property type="project" value="UniProtKB"/>
</dbReference>
<dbReference type="GO" id="GO:0045830">
    <property type="term" value="P:positive regulation of isotype switching"/>
    <property type="evidence" value="ECO:0000250"/>
    <property type="project" value="UniProtKB"/>
</dbReference>
<dbReference type="GO" id="GO:0106300">
    <property type="term" value="P:protein-DNA covalent cross-linking repair"/>
    <property type="evidence" value="ECO:0000250"/>
    <property type="project" value="UniProtKB"/>
</dbReference>
<dbReference type="GO" id="GO:0006508">
    <property type="term" value="P:proteolysis"/>
    <property type="evidence" value="ECO:0007669"/>
    <property type="project" value="UniProtKB-KW"/>
</dbReference>
<dbReference type="Gene3D" id="3.90.1680.10">
    <property type="entry name" value="SOS response associated peptidase-like"/>
    <property type="match status" value="1"/>
</dbReference>
<dbReference type="InterPro" id="IPR003738">
    <property type="entry name" value="SRAP"/>
</dbReference>
<dbReference type="InterPro" id="IPR036590">
    <property type="entry name" value="SRAP-like"/>
</dbReference>
<dbReference type="PANTHER" id="PTHR13604:SF0">
    <property type="entry name" value="ABASIC SITE PROCESSING PROTEIN HMCES"/>
    <property type="match status" value="1"/>
</dbReference>
<dbReference type="PANTHER" id="PTHR13604">
    <property type="entry name" value="DC12-RELATED"/>
    <property type="match status" value="1"/>
</dbReference>
<dbReference type="Pfam" id="PF02586">
    <property type="entry name" value="SRAP"/>
    <property type="match status" value="1"/>
</dbReference>
<dbReference type="SUPFAM" id="SSF143081">
    <property type="entry name" value="BB1717-like"/>
    <property type="match status" value="1"/>
</dbReference>
<organism>
    <name type="scientific">Xenopus tropicalis</name>
    <name type="common">Western clawed frog</name>
    <name type="synonym">Silurana tropicalis</name>
    <dbReference type="NCBI Taxonomy" id="8364"/>
    <lineage>
        <taxon>Eukaryota</taxon>
        <taxon>Metazoa</taxon>
        <taxon>Chordata</taxon>
        <taxon>Craniata</taxon>
        <taxon>Vertebrata</taxon>
        <taxon>Euteleostomi</taxon>
        <taxon>Amphibia</taxon>
        <taxon>Batrachia</taxon>
        <taxon>Anura</taxon>
        <taxon>Pipoidea</taxon>
        <taxon>Pipidae</taxon>
        <taxon>Xenopodinae</taxon>
        <taxon>Xenopus</taxon>
        <taxon>Silurana</taxon>
    </lineage>
</organism>
<sequence length="335" mass="38164">MCGRTACTLAPDDVRKACTYRDKQGGRKWPNWRDGDSDKYQPSYNKSPQSNSPVLLSLKHFQKDADSSERVLAAMRWGLIPSWFNEPDPSKMQYKTNNCRSDTMTEKALYKASLFKGKRCVVLADGFYEWQRQNSEKQPYYIYFPQIKAEKSPAEQDITDWNGQRLLTMAGLFDCWEPPNGGETLYSYTVITVDSSKTMNWIHDRMPAILDGDEAVRKWLDFGEVPTKDALKLIHPIENITYHPVSTVVNNSRNNTPECMAAIILTQKKGPALSASSKKMLDWLQNKSPKKEESHSIQSPKLSQFGAPPKKTSAGLMQQWLKKEDGEPSPKRAKK</sequence>
<keyword id="KW-0068">Autocatalytic cleavage</keyword>
<keyword id="KW-0158">Chromosome</keyword>
<keyword id="KW-0190">Covalent protein-DNA linkage</keyword>
<keyword id="KW-0227">DNA damage</keyword>
<keyword id="KW-0238">DNA-binding</keyword>
<keyword id="KW-0378">Hydrolase</keyword>
<keyword id="KW-0456">Lyase</keyword>
<keyword id="KW-0645">Protease</keyword>
<keyword id="KW-1185">Reference proteome</keyword>
<keyword id="KW-0832">Ubl conjugation</keyword>
<gene>
    <name evidence="4" type="primary">hmces</name>
    <name evidence="4" type="synonym">srapd1</name>
    <name type="ORF">TGas027m07.1</name>
</gene>
<protein>
    <recommendedName>
        <fullName evidence="6">Abasic site processing protein HMCES</fullName>
        <ecNumber evidence="4">4.-.-.-</ecNumber>
    </recommendedName>
    <alternativeName>
        <fullName>Embryonic stem cell-specific 5-hydroxymethylcytosine-binding protein</fullName>
        <shortName evidence="4">ES cell-specific 5hmC-binding protein</shortName>
    </alternativeName>
    <alternativeName>
        <fullName evidence="3">Peptidase HMCES</fullName>
        <ecNumber evidence="3">3.4.-.-</ecNumber>
    </alternativeName>
    <alternativeName>
        <fullName evidence="4">SRAP domain-containing protein 1</fullName>
    </alternativeName>
</protein>
<reference key="1">
    <citation type="submission" date="2006-03" db="EMBL/GenBank/DDBJ databases">
        <authorList>
            <consortium name="Sanger Xenopus tropicalis EST/cDNA project"/>
        </authorList>
    </citation>
    <scope>NUCLEOTIDE SEQUENCE [LARGE SCALE MRNA]</scope>
    <source>
        <tissue>Gastrula</tissue>
    </source>
</reference>
<reference key="2">
    <citation type="submission" date="2003-11" db="EMBL/GenBank/DDBJ databases">
        <authorList>
            <consortium name="NIH - Xenopus Gene Collection (XGC) project"/>
        </authorList>
    </citation>
    <scope>NUCLEOTIDE SEQUENCE [LARGE SCALE MRNA]</scope>
    <source>
        <tissue>Embryo</tissue>
    </source>
</reference>
<accession>Q6P7N4</accession>
<accession>Q28G29</accession>
<name>HMCES_XENTR</name>
<proteinExistence type="evidence at transcript level"/>
<feature type="initiator methionine" description="Removed" evidence="3">
    <location>
        <position position="1"/>
    </location>
</feature>
<feature type="chain" id="PRO_0000164400" description="Abasic site processing protein HMCES">
    <location>
        <begin position="2"/>
        <end position="335"/>
    </location>
</feature>
<feature type="region of interest" description="Disordered" evidence="5">
    <location>
        <begin position="24"/>
        <end position="51"/>
    </location>
</feature>
<feature type="region of interest" description="Disordered" evidence="5">
    <location>
        <begin position="284"/>
        <end position="335"/>
    </location>
</feature>
<feature type="compositionally biased region" description="Basic and acidic residues" evidence="5">
    <location>
        <begin position="24"/>
        <end position="39"/>
    </location>
</feature>
<feature type="compositionally biased region" description="Polar residues" evidence="5">
    <location>
        <begin position="40"/>
        <end position="51"/>
    </location>
</feature>
<feature type="compositionally biased region" description="Basic and acidic residues" evidence="5">
    <location>
        <begin position="321"/>
        <end position="335"/>
    </location>
</feature>
<feature type="active site" description="Nucleophile" evidence="4">
    <location>
        <position position="2"/>
    </location>
</feature>
<feature type="active site" evidence="4">
    <location>
        <position position="129"/>
    </location>
</feature>
<feature type="site" description="Required for sensing abasic sites" evidence="1">
    <location>
        <position position="129"/>
    </location>
</feature>
<feature type="site" description="Required to stabilize abasic sites" evidence="1">
    <location>
        <position position="203"/>
    </location>
</feature>
<feature type="modified residue" description="Thiazolidine linkage to a ring-opened DNA abasic site" evidence="4">
    <location>
        <position position="2"/>
    </location>
</feature>
<comment type="function">
    <text evidence="2 3 4">Sensor of abasic sites in single-stranded DNA (ssDNA) required to preserve genome integrity by promoting error-free repair of abasic sites. Acts as an enzyme that recognizes and binds abasic sites in ssDNA at replication forks and chemically modifies the lesion by forming a covalent cross-link with DNA: forms a stable thiazolidine linkage between a ring-opened abasic site and the alpha-amino and sulfhydryl substituents of its N-terminal catalytic cysteine residue (By similarity). The hmces DNA-protein cross-link is then either reversed or degraded. Hmces is able to catalyze the reversal of its thiazolidine cross-link and cycle between a cross-link and a non-cross-linked state depending on DNA context: mediates self-reversal of the thiazolidine cross-link in double stranded DNA, allowing apex1 to initiate downstream repair of abasic sites. The hmces DNA-protein cross-link can also be degraded by the sprtn metalloprotease following unfolding by the brip1/fancj helicase (By similarity). Promotes error-free repair of abasic sites by protecting abasic sites from translesion synthesis (TLS) polymerases and endonucleases that are error-prone and would generate mutations and double-strand breaks (By similarity). Acts as a protease: mediates autocatalytic processing of its N-terminal methionine in order to expose the catalytic cysteine (By similarity). The hmces DNA-protein cross-link is then either reversed or degraded. According to a model, the HMCES DNA-protein cross-link (By similarity).</text>
</comment>
<comment type="activity regulation">
    <text evidence="4">Formation and reversal of DNA-protein cross-link depends on DNA context. Catalyzes formation of the thiazolidine linkage in presence of abasic sites in single-stranded DNA. Mediates the reversal of the thiazolidine cross-link in presence of double stranded DNA.</text>
</comment>
<comment type="subcellular location">
    <subcellularLocation>
        <location evidence="4">Chromosome</location>
    </subcellularLocation>
    <text evidence="4">Recruited to chromatin following DNA damage. Localizes to replication forks.</text>
</comment>
<comment type="domain">
    <text evidence="1 4">The N-terminal catalytic Cys-2 residue forms a thiazolidine linkage to a ring-opened DNA abasic site. Glu-129 catalyzes reversal of the thiazolidine linkage; self-reversal is favoured by duplex DNA formation (By similarity). Glu-129 is also involved in sensing abasic sites in single-stranded DNA (ssDNA). His-203 stabilizes the abasic sites by forming a hydrogen bond with the O4' hydroxyl group (By similarity).</text>
</comment>
<comment type="PTM">
    <text evidence="2">Ubiquitination of the hmces DNA-protein cross-link by rfwd3 may promotes its degradation.</text>
</comment>
<comment type="similarity">
    <text evidence="6">Belongs to the SOS response-associated peptidase family.</text>
</comment>